<proteinExistence type="inferred from homology"/>
<name>TASY_TAXBA</name>
<gene>
    <name type="primary">TDC1</name>
    <name type="synonym">TASY</name>
</gene>
<feature type="chain" id="PRO_0000186449" description="Taxadiene synthase">
    <location>
        <begin position="1"/>
        <end position="862"/>
    </location>
</feature>
<feature type="short sequence motif" description="DDXXD motif">
    <location>
        <begin position="613"/>
        <end position="617"/>
    </location>
</feature>
<feature type="binding site" evidence="1">
    <location>
        <position position="613"/>
    </location>
    <ligand>
        <name>Mg(2+)</name>
        <dbReference type="ChEBI" id="CHEBI:18420"/>
        <label>1</label>
    </ligand>
</feature>
<feature type="binding site" evidence="1">
    <location>
        <position position="613"/>
    </location>
    <ligand>
        <name>Mg(2+)</name>
        <dbReference type="ChEBI" id="CHEBI:18420"/>
        <label>2</label>
    </ligand>
</feature>
<feature type="binding site" evidence="1">
    <location>
        <position position="617"/>
    </location>
    <ligand>
        <name>Mg(2+)</name>
        <dbReference type="ChEBI" id="CHEBI:18420"/>
        <label>1</label>
    </ligand>
</feature>
<feature type="binding site" evidence="1">
    <location>
        <position position="617"/>
    </location>
    <ligand>
        <name>Mg(2+)</name>
        <dbReference type="ChEBI" id="CHEBI:18420"/>
        <label>2</label>
    </ligand>
</feature>
<feature type="binding site" evidence="1">
    <location>
        <position position="757"/>
    </location>
    <ligand>
        <name>Mg(2+)</name>
        <dbReference type="ChEBI" id="CHEBI:18420"/>
        <label>3</label>
    </ligand>
</feature>
<feature type="binding site" evidence="1">
    <location>
        <position position="761"/>
    </location>
    <ligand>
        <name>Mg(2+)</name>
        <dbReference type="ChEBI" id="CHEBI:18420"/>
        <label>3</label>
    </ligand>
</feature>
<feature type="binding site" evidence="1">
    <location>
        <position position="765"/>
    </location>
    <ligand>
        <name>Mg(2+)</name>
        <dbReference type="ChEBI" id="CHEBI:18420"/>
        <label>3</label>
    </ligand>
</feature>
<reference key="1">
    <citation type="thesis" date="2001" institute="Technische Universitaet Berlin" country="Germany">
        <authorList>
            <person name="Goerhardt B."/>
        </authorList>
    </citation>
    <scope>NUCLEOTIDE SEQUENCE [GENOMIC DNA]</scope>
</reference>
<protein>
    <recommendedName>
        <fullName>Taxadiene synthase</fullName>
        <ecNumber>4.2.3.17</ecNumber>
    </recommendedName>
    <alternativeName>
        <fullName>Taxa-4(5),11(12)-diene synthase</fullName>
    </alternativeName>
</protein>
<sequence length="862" mass="98049">MAQLSFNAALKMNALGNKAIHDPTNCRAKSERQMMWVCSRSGRTRVKMSRGSGGPGPVVMMSSSTGTSKVVSETSSTIVDDIPRLSANYHGDLWHHNVIQTLETPFRESSTYQERADELVVKIKDMFNALGDGDISPSAYDTAWVARVATVSSDGSEKPRFPQALNWVLNNQLQDGSWGIESHFSLCDRLLNTVNSVIALSVWKTGHSQVEQGAEFIAENLRLLNEEDELSPDFEIIFPALLQKAKALGINLPYDLPFIKSLSTTREARLTDVSAAADNIPANMLNALEGLEEVIDWNKIMRFQSKDGSFLSSPASTACVLMNTGDEKCFTLLNNLLDKFGGCVPCMYSIDLLERLSLVDNIEHLGIGRHFKQEIKVALDYVYRHWSERGIGWGRDSLVPDLNTTALGLRTLRTHGYDVSSDVLNNFKDENGRFFSSAGQTHVELRSVVNLFRASDLAFPDEGAMDDARKFAEPYLRDALATKISTNTKLYKEIEYVVEYPWHMSIPRLEARSYIDSYDDDYVWQRKTLYRMPSLSNSKCLELAKLDFNIVQSLHQEELKLLTRWWKESGMADINFTRHRVAEVYFSSATFEPEYSATRIAFTKIGCLQVLFDDMADIFATLDELKSFTEGVKRWDTSLLHEIPECMQTCFKVWFKLMEEVNNDVVKVQGRDMLAHIRKPWELYFNCYVQEREWLEAGYIPTFEEYLKTYAISVGLGPCTLQPILLMGELVKDDVVEKVHYPSNMFELVSLSWRLTNDTKTYQAEKARGQQASGIACYMKDNPGATEEDAIKHICRVVDRALKEASFEYFKPSNDIPMGCKSFIFNLRLCVQIFYKFIDGYGIANEEIKDYIRKVYIDPIQV</sequence>
<keyword id="KW-0456">Lyase</keyword>
<keyword id="KW-0460">Magnesium</keyword>
<keyword id="KW-0479">Metal-binding</keyword>
<keyword id="KW-0876">Taxol biosynthesis</keyword>
<organism>
    <name type="scientific">Taxus baccata</name>
    <name type="common">English yew</name>
    <dbReference type="NCBI Taxonomy" id="25629"/>
    <lineage>
        <taxon>Eukaryota</taxon>
        <taxon>Viridiplantae</taxon>
        <taxon>Streptophyta</taxon>
        <taxon>Embryophyta</taxon>
        <taxon>Tracheophyta</taxon>
        <taxon>Spermatophyta</taxon>
        <taxon>Pinopsida</taxon>
        <taxon>Pinidae</taxon>
        <taxon>Conifers II</taxon>
        <taxon>Cupressales</taxon>
        <taxon>Taxaceae</taxon>
        <taxon>Taxus</taxon>
    </lineage>
</organism>
<comment type="function">
    <text>Catalyzes the cyclization of the ubiquitous isoprenoid intermediate geranylgeranyl diphosphate to taxa-4,11-diene, the parent olefin with a taxane skeleton.</text>
</comment>
<comment type="catalytic activity">
    <reaction>
        <text>(2E,6E,10E)-geranylgeranyl diphosphate = taxa-4(5),11(12)-diene + diphosphate</text>
        <dbReference type="Rhea" id="RHEA:20912"/>
        <dbReference type="ChEBI" id="CHEBI:30037"/>
        <dbReference type="ChEBI" id="CHEBI:33019"/>
        <dbReference type="ChEBI" id="CHEBI:58756"/>
        <dbReference type="EC" id="4.2.3.17"/>
    </reaction>
</comment>
<comment type="cofactor">
    <cofactor evidence="1">
        <name>Mg(2+)</name>
        <dbReference type="ChEBI" id="CHEBI:18420"/>
    </cofactor>
    <text evidence="1">Binds 3 Mg(2+) ions per subunit.</text>
</comment>
<comment type="pathway">
    <text>Alkaloid biosynthesis; taxol biosynthesis; taxa-4(20),11-dien-5alpha-ol from geranylgeranyl diphosphate: step 1/2.</text>
</comment>
<comment type="domain">
    <text>The Asp-Asp-Xaa-Xaa-Asp/Glu (DDXXD/E) motif is important for the catalytic activity, presumably through binding to Mg(2+).</text>
</comment>
<comment type="similarity">
    <text evidence="2">Belongs to the terpene synthase family.</text>
</comment>
<dbReference type="EC" id="4.2.3.17"/>
<dbReference type="EMBL" id="AJ320538">
    <property type="protein sequence ID" value="CAC42773.1"/>
    <property type="molecule type" value="Genomic_DNA"/>
</dbReference>
<dbReference type="SMR" id="Q93YA3"/>
<dbReference type="BRENDA" id="4.2.3.17">
    <property type="organism ID" value="6222"/>
</dbReference>
<dbReference type="UniPathway" id="UPA00842">
    <property type="reaction ID" value="UER00806"/>
</dbReference>
<dbReference type="GO" id="GO:0000287">
    <property type="term" value="F:magnesium ion binding"/>
    <property type="evidence" value="ECO:0007669"/>
    <property type="project" value="InterPro"/>
</dbReference>
<dbReference type="GO" id="GO:0050553">
    <property type="term" value="F:taxadiene synthase activity"/>
    <property type="evidence" value="ECO:0007669"/>
    <property type="project" value="UniProtKB-EC"/>
</dbReference>
<dbReference type="GO" id="GO:0010333">
    <property type="term" value="F:terpene synthase activity"/>
    <property type="evidence" value="ECO:0007669"/>
    <property type="project" value="InterPro"/>
</dbReference>
<dbReference type="GO" id="GO:0042617">
    <property type="term" value="P:paclitaxel biosynthetic process"/>
    <property type="evidence" value="ECO:0007669"/>
    <property type="project" value="UniProtKB-UniPathway"/>
</dbReference>
<dbReference type="CDD" id="cd00684">
    <property type="entry name" value="Terpene_cyclase_plant_C1"/>
    <property type="match status" value="1"/>
</dbReference>
<dbReference type="FunFam" id="1.50.10.130:FF:000002">
    <property type="entry name" value="Ent-copalyl diphosphate synthase, chloroplastic"/>
    <property type="match status" value="1"/>
</dbReference>
<dbReference type="FunFam" id="1.10.600.10:FF:000005">
    <property type="entry name" value="Ent-kaur-16-ene synthase, chloroplastic"/>
    <property type="match status" value="1"/>
</dbReference>
<dbReference type="Gene3D" id="1.50.10.160">
    <property type="match status" value="1"/>
</dbReference>
<dbReference type="Gene3D" id="1.10.600.10">
    <property type="entry name" value="Farnesyl Diphosphate Synthase"/>
    <property type="match status" value="1"/>
</dbReference>
<dbReference type="Gene3D" id="1.50.10.130">
    <property type="entry name" value="Terpene synthase, N-terminal domain"/>
    <property type="match status" value="1"/>
</dbReference>
<dbReference type="InterPro" id="IPR008949">
    <property type="entry name" value="Isoprenoid_synthase_dom_sf"/>
</dbReference>
<dbReference type="InterPro" id="IPR034741">
    <property type="entry name" value="Terpene_cyclase-like_1_C"/>
</dbReference>
<dbReference type="InterPro" id="IPR044814">
    <property type="entry name" value="Terpene_cyclase_plant_C1"/>
</dbReference>
<dbReference type="InterPro" id="IPR001906">
    <property type="entry name" value="Terpene_synth_N"/>
</dbReference>
<dbReference type="InterPro" id="IPR036965">
    <property type="entry name" value="Terpene_synth_N_sf"/>
</dbReference>
<dbReference type="InterPro" id="IPR050148">
    <property type="entry name" value="Terpene_synthase-like"/>
</dbReference>
<dbReference type="InterPro" id="IPR005630">
    <property type="entry name" value="Terpene_synthase_metal-bd"/>
</dbReference>
<dbReference type="InterPro" id="IPR008930">
    <property type="entry name" value="Terpenoid_cyclase/PrenylTrfase"/>
</dbReference>
<dbReference type="PANTHER" id="PTHR31739:SF25">
    <property type="entry name" value="(E,E)-GERANYLLINALOOL SYNTHASE"/>
    <property type="match status" value="1"/>
</dbReference>
<dbReference type="PANTHER" id="PTHR31739">
    <property type="entry name" value="ENT-COPALYL DIPHOSPHATE SYNTHASE, CHLOROPLASTIC"/>
    <property type="match status" value="1"/>
</dbReference>
<dbReference type="Pfam" id="PF01397">
    <property type="entry name" value="Terpene_synth"/>
    <property type="match status" value="1"/>
</dbReference>
<dbReference type="Pfam" id="PF03936">
    <property type="entry name" value="Terpene_synth_C"/>
    <property type="match status" value="1"/>
</dbReference>
<dbReference type="SFLD" id="SFLDS00005">
    <property type="entry name" value="Isoprenoid_Synthase_Type_I"/>
    <property type="match status" value="1"/>
</dbReference>
<dbReference type="SFLD" id="SFLDG01019">
    <property type="entry name" value="Terpene_Cyclase_Like_1_C_Termi"/>
    <property type="match status" value="1"/>
</dbReference>
<dbReference type="SFLD" id="SFLDG01014">
    <property type="entry name" value="Terpene_Cyclase_Like_1_N-term"/>
    <property type="match status" value="1"/>
</dbReference>
<dbReference type="SUPFAM" id="SSF48239">
    <property type="entry name" value="Terpenoid cyclases/Protein prenyltransferases"/>
    <property type="match status" value="2"/>
</dbReference>
<dbReference type="SUPFAM" id="SSF48576">
    <property type="entry name" value="Terpenoid synthases"/>
    <property type="match status" value="1"/>
</dbReference>
<accession>Q93YA3</accession>
<evidence type="ECO:0000250" key="1"/>
<evidence type="ECO:0000305" key="2"/>